<name>MURA_PROA2</name>
<accession>B4S6J0</accession>
<feature type="chain" id="PRO_1000094709" description="UDP-N-acetylglucosamine 1-carboxyvinyltransferase">
    <location>
        <begin position="1"/>
        <end position="425"/>
    </location>
</feature>
<feature type="active site" description="Proton donor" evidence="1">
    <location>
        <position position="117"/>
    </location>
</feature>
<feature type="binding site" evidence="1">
    <location>
        <begin position="22"/>
        <end position="23"/>
    </location>
    <ligand>
        <name>phosphoenolpyruvate</name>
        <dbReference type="ChEBI" id="CHEBI:58702"/>
    </ligand>
</feature>
<feature type="binding site" evidence="1">
    <location>
        <position position="93"/>
    </location>
    <ligand>
        <name>UDP-N-acetyl-alpha-D-glucosamine</name>
        <dbReference type="ChEBI" id="CHEBI:57705"/>
    </ligand>
</feature>
<feature type="binding site" evidence="1">
    <location>
        <begin position="122"/>
        <end position="126"/>
    </location>
    <ligand>
        <name>UDP-N-acetyl-alpha-D-glucosamine</name>
        <dbReference type="ChEBI" id="CHEBI:57705"/>
    </ligand>
</feature>
<feature type="binding site" evidence="1">
    <location>
        <position position="307"/>
    </location>
    <ligand>
        <name>UDP-N-acetyl-alpha-D-glucosamine</name>
        <dbReference type="ChEBI" id="CHEBI:57705"/>
    </ligand>
</feature>
<feature type="binding site" evidence="1">
    <location>
        <position position="329"/>
    </location>
    <ligand>
        <name>UDP-N-acetyl-alpha-D-glucosamine</name>
        <dbReference type="ChEBI" id="CHEBI:57705"/>
    </ligand>
</feature>
<feature type="modified residue" description="2-(S-cysteinyl)pyruvic acid O-phosphothioketal" evidence="1">
    <location>
        <position position="117"/>
    </location>
</feature>
<proteinExistence type="inferred from homology"/>
<gene>
    <name evidence="1" type="primary">murA</name>
    <name type="ordered locus">Paes_0698</name>
</gene>
<sequence>MDKLVINGGHRLTGSVAASGSKNSALPLIAATLLCDNGTCRLERIPDLKDTRTFQELLAYLGADISYSGSRLSVSTQNLRAIQAPYELVKKMRASIYVLGPLLARFGRAEVSLPGGCAFGPRPIDLHLMAMEKLGASISIKNGYIEASIAKGRLTGGHIEFPVSSVGATGNALMAASLAEGTTTITNASIEPEITALCDFLMAMGADIKGAGTTALTIEGVPSLHPVAFTNIFDRIEAGTLLAAAAITKGTISITGIDHTHMGAVLKKFKQAGCRITIDDDSLTLQSPDRLEPTDIIASPYPFFPTDMQAQWIALMTQANGSSRIIDKVYHERFNHIPELNRLGAKIEINNNEAIVHGPQLLTGTTVMSTDLRASACLVLAGLVAQGTTEVLRVYHLDRGYEKIEEKLRHLGADIQRENYQEFST</sequence>
<evidence type="ECO:0000255" key="1">
    <source>
        <dbReference type="HAMAP-Rule" id="MF_00111"/>
    </source>
</evidence>
<protein>
    <recommendedName>
        <fullName evidence="1">UDP-N-acetylglucosamine 1-carboxyvinyltransferase</fullName>
        <ecNumber evidence="1">2.5.1.7</ecNumber>
    </recommendedName>
    <alternativeName>
        <fullName evidence="1">Enoylpyruvate transferase</fullName>
    </alternativeName>
    <alternativeName>
        <fullName evidence="1">UDP-N-acetylglucosamine enolpyruvyl transferase</fullName>
        <shortName evidence="1">EPT</shortName>
    </alternativeName>
</protein>
<organism>
    <name type="scientific">Prosthecochloris aestuarii (strain DSM 271 / SK 413)</name>
    <dbReference type="NCBI Taxonomy" id="290512"/>
    <lineage>
        <taxon>Bacteria</taxon>
        <taxon>Pseudomonadati</taxon>
        <taxon>Chlorobiota</taxon>
        <taxon>Chlorobiia</taxon>
        <taxon>Chlorobiales</taxon>
        <taxon>Chlorobiaceae</taxon>
        <taxon>Prosthecochloris</taxon>
    </lineage>
</organism>
<comment type="function">
    <text evidence="1">Cell wall formation. Adds enolpyruvyl to UDP-N-acetylglucosamine.</text>
</comment>
<comment type="catalytic activity">
    <reaction evidence="1">
        <text>phosphoenolpyruvate + UDP-N-acetyl-alpha-D-glucosamine = UDP-N-acetyl-3-O-(1-carboxyvinyl)-alpha-D-glucosamine + phosphate</text>
        <dbReference type="Rhea" id="RHEA:18681"/>
        <dbReference type="ChEBI" id="CHEBI:43474"/>
        <dbReference type="ChEBI" id="CHEBI:57705"/>
        <dbReference type="ChEBI" id="CHEBI:58702"/>
        <dbReference type="ChEBI" id="CHEBI:68483"/>
        <dbReference type="EC" id="2.5.1.7"/>
    </reaction>
</comment>
<comment type="pathway">
    <text evidence="1">Cell wall biogenesis; peptidoglycan biosynthesis.</text>
</comment>
<comment type="subcellular location">
    <subcellularLocation>
        <location evidence="1">Cytoplasm</location>
    </subcellularLocation>
</comment>
<comment type="similarity">
    <text evidence="1">Belongs to the EPSP synthase family. MurA subfamily.</text>
</comment>
<dbReference type="EC" id="2.5.1.7" evidence="1"/>
<dbReference type="EMBL" id="CP001108">
    <property type="protein sequence ID" value="ACF45745.1"/>
    <property type="molecule type" value="Genomic_DNA"/>
</dbReference>
<dbReference type="RefSeq" id="WP_012505282.1">
    <property type="nucleotide sequence ID" value="NC_011059.1"/>
</dbReference>
<dbReference type="SMR" id="B4S6J0"/>
<dbReference type="STRING" id="290512.Paes_0698"/>
<dbReference type="KEGG" id="paa:Paes_0698"/>
<dbReference type="eggNOG" id="COG0766">
    <property type="taxonomic scope" value="Bacteria"/>
</dbReference>
<dbReference type="HOGENOM" id="CLU_027387_0_0_10"/>
<dbReference type="UniPathway" id="UPA00219"/>
<dbReference type="Proteomes" id="UP000002725">
    <property type="component" value="Chromosome"/>
</dbReference>
<dbReference type="GO" id="GO:0005737">
    <property type="term" value="C:cytoplasm"/>
    <property type="evidence" value="ECO:0007669"/>
    <property type="project" value="UniProtKB-SubCell"/>
</dbReference>
<dbReference type="GO" id="GO:0008760">
    <property type="term" value="F:UDP-N-acetylglucosamine 1-carboxyvinyltransferase activity"/>
    <property type="evidence" value="ECO:0007669"/>
    <property type="project" value="UniProtKB-UniRule"/>
</dbReference>
<dbReference type="GO" id="GO:0051301">
    <property type="term" value="P:cell division"/>
    <property type="evidence" value="ECO:0007669"/>
    <property type="project" value="UniProtKB-KW"/>
</dbReference>
<dbReference type="GO" id="GO:0071555">
    <property type="term" value="P:cell wall organization"/>
    <property type="evidence" value="ECO:0007669"/>
    <property type="project" value="UniProtKB-KW"/>
</dbReference>
<dbReference type="GO" id="GO:0009252">
    <property type="term" value="P:peptidoglycan biosynthetic process"/>
    <property type="evidence" value="ECO:0007669"/>
    <property type="project" value="UniProtKB-UniRule"/>
</dbReference>
<dbReference type="GO" id="GO:0008360">
    <property type="term" value="P:regulation of cell shape"/>
    <property type="evidence" value="ECO:0007669"/>
    <property type="project" value="UniProtKB-KW"/>
</dbReference>
<dbReference type="GO" id="GO:0019277">
    <property type="term" value="P:UDP-N-acetylgalactosamine biosynthetic process"/>
    <property type="evidence" value="ECO:0007669"/>
    <property type="project" value="InterPro"/>
</dbReference>
<dbReference type="CDD" id="cd01555">
    <property type="entry name" value="UdpNAET"/>
    <property type="match status" value="1"/>
</dbReference>
<dbReference type="FunFam" id="3.65.10.10:FF:000001">
    <property type="entry name" value="UDP-N-acetylglucosamine 1-carboxyvinyltransferase"/>
    <property type="match status" value="1"/>
</dbReference>
<dbReference type="Gene3D" id="3.65.10.10">
    <property type="entry name" value="Enolpyruvate transferase domain"/>
    <property type="match status" value="2"/>
</dbReference>
<dbReference type="HAMAP" id="MF_00111">
    <property type="entry name" value="MurA"/>
    <property type="match status" value="1"/>
</dbReference>
<dbReference type="InterPro" id="IPR001986">
    <property type="entry name" value="Enolpyruvate_Tfrase_dom"/>
</dbReference>
<dbReference type="InterPro" id="IPR036968">
    <property type="entry name" value="Enolpyruvate_Tfrase_sf"/>
</dbReference>
<dbReference type="InterPro" id="IPR050068">
    <property type="entry name" value="MurA_subfamily"/>
</dbReference>
<dbReference type="InterPro" id="IPR013792">
    <property type="entry name" value="RNA3'P_cycl/enolpyr_Trfase_a/b"/>
</dbReference>
<dbReference type="InterPro" id="IPR005750">
    <property type="entry name" value="UDP_GlcNAc_COvinyl_MurA"/>
</dbReference>
<dbReference type="NCBIfam" id="TIGR01072">
    <property type="entry name" value="murA"/>
    <property type="match status" value="1"/>
</dbReference>
<dbReference type="NCBIfam" id="NF006873">
    <property type="entry name" value="PRK09369.1"/>
    <property type="match status" value="1"/>
</dbReference>
<dbReference type="PANTHER" id="PTHR43783">
    <property type="entry name" value="UDP-N-ACETYLGLUCOSAMINE 1-CARBOXYVINYLTRANSFERASE"/>
    <property type="match status" value="1"/>
</dbReference>
<dbReference type="PANTHER" id="PTHR43783:SF1">
    <property type="entry name" value="UDP-N-ACETYLGLUCOSAMINE 1-CARBOXYVINYLTRANSFERASE"/>
    <property type="match status" value="1"/>
</dbReference>
<dbReference type="Pfam" id="PF00275">
    <property type="entry name" value="EPSP_synthase"/>
    <property type="match status" value="1"/>
</dbReference>
<dbReference type="SUPFAM" id="SSF55205">
    <property type="entry name" value="EPT/RTPC-like"/>
    <property type="match status" value="1"/>
</dbReference>
<keyword id="KW-0131">Cell cycle</keyword>
<keyword id="KW-0132">Cell division</keyword>
<keyword id="KW-0133">Cell shape</keyword>
<keyword id="KW-0961">Cell wall biogenesis/degradation</keyword>
<keyword id="KW-0963">Cytoplasm</keyword>
<keyword id="KW-0573">Peptidoglycan synthesis</keyword>
<keyword id="KW-0670">Pyruvate</keyword>
<keyword id="KW-0808">Transferase</keyword>
<reference key="1">
    <citation type="submission" date="2008-06" db="EMBL/GenBank/DDBJ databases">
        <title>Complete sequence of chromosome of Prosthecochloris aestuarii DSM 271.</title>
        <authorList>
            <consortium name="US DOE Joint Genome Institute"/>
            <person name="Lucas S."/>
            <person name="Copeland A."/>
            <person name="Lapidus A."/>
            <person name="Glavina del Rio T."/>
            <person name="Dalin E."/>
            <person name="Tice H."/>
            <person name="Bruce D."/>
            <person name="Goodwin L."/>
            <person name="Pitluck S."/>
            <person name="Schmutz J."/>
            <person name="Larimer F."/>
            <person name="Land M."/>
            <person name="Hauser L."/>
            <person name="Kyrpides N."/>
            <person name="Anderson I."/>
            <person name="Liu Z."/>
            <person name="Li T."/>
            <person name="Zhao F."/>
            <person name="Overmann J."/>
            <person name="Bryant D.A."/>
            <person name="Richardson P."/>
        </authorList>
    </citation>
    <scope>NUCLEOTIDE SEQUENCE [LARGE SCALE GENOMIC DNA]</scope>
    <source>
        <strain>DSM 271 / SK 413</strain>
    </source>
</reference>